<proteinExistence type="inferred from homology"/>
<dbReference type="EMBL" id="CR936257">
    <property type="protein sequence ID" value="CAI49505.1"/>
    <property type="molecule type" value="Genomic_DNA"/>
</dbReference>
<dbReference type="RefSeq" id="WP_011323130.1">
    <property type="nucleotide sequence ID" value="NC_007426.1"/>
</dbReference>
<dbReference type="SMR" id="Q3IQT9"/>
<dbReference type="STRING" id="348780.NP_2828A"/>
<dbReference type="EnsemblBacteria" id="CAI49505">
    <property type="protein sequence ID" value="CAI49505"/>
    <property type="gene ID" value="NP_2828A"/>
</dbReference>
<dbReference type="GeneID" id="3703168"/>
<dbReference type="KEGG" id="nph:NP_2828A"/>
<dbReference type="eggNOG" id="arCOG01722">
    <property type="taxonomic scope" value="Archaea"/>
</dbReference>
<dbReference type="HOGENOM" id="CLU_103849_0_0_2"/>
<dbReference type="OrthoDB" id="372127at2157"/>
<dbReference type="Proteomes" id="UP000002698">
    <property type="component" value="Chromosome"/>
</dbReference>
<dbReference type="GO" id="GO:0005829">
    <property type="term" value="C:cytosol"/>
    <property type="evidence" value="ECO:0007669"/>
    <property type="project" value="TreeGrafter"/>
</dbReference>
<dbReference type="GO" id="GO:0015935">
    <property type="term" value="C:small ribosomal subunit"/>
    <property type="evidence" value="ECO:0007669"/>
    <property type="project" value="TreeGrafter"/>
</dbReference>
<dbReference type="GO" id="GO:0019843">
    <property type="term" value="F:rRNA binding"/>
    <property type="evidence" value="ECO:0007669"/>
    <property type="project" value="UniProtKB-UniRule"/>
</dbReference>
<dbReference type="GO" id="GO:0003735">
    <property type="term" value="F:structural constituent of ribosome"/>
    <property type="evidence" value="ECO:0007669"/>
    <property type="project" value="InterPro"/>
</dbReference>
<dbReference type="GO" id="GO:0006412">
    <property type="term" value="P:translation"/>
    <property type="evidence" value="ECO:0007669"/>
    <property type="project" value="UniProtKB-UniRule"/>
</dbReference>
<dbReference type="FunFam" id="4.10.910.10:FF:000002">
    <property type="entry name" value="40S ribosomal protein S18"/>
    <property type="match status" value="1"/>
</dbReference>
<dbReference type="Gene3D" id="1.10.8.50">
    <property type="match status" value="1"/>
</dbReference>
<dbReference type="Gene3D" id="4.10.910.10">
    <property type="entry name" value="30s ribosomal protein s13, domain 2"/>
    <property type="match status" value="1"/>
</dbReference>
<dbReference type="HAMAP" id="MF_01315">
    <property type="entry name" value="Ribosomal_uS13"/>
    <property type="match status" value="1"/>
</dbReference>
<dbReference type="InterPro" id="IPR027437">
    <property type="entry name" value="Rbsml_uS13_C"/>
</dbReference>
<dbReference type="InterPro" id="IPR001892">
    <property type="entry name" value="Ribosomal_uS13"/>
</dbReference>
<dbReference type="InterPro" id="IPR010979">
    <property type="entry name" value="Ribosomal_uS13-like_H2TH"/>
</dbReference>
<dbReference type="InterPro" id="IPR019977">
    <property type="entry name" value="Ribosomal_uS13_archaeal"/>
</dbReference>
<dbReference type="InterPro" id="IPR018269">
    <property type="entry name" value="Ribosomal_uS13_CS"/>
</dbReference>
<dbReference type="NCBIfam" id="NF003140">
    <property type="entry name" value="PRK04053.1"/>
    <property type="match status" value="1"/>
</dbReference>
<dbReference type="NCBIfam" id="TIGR03629">
    <property type="entry name" value="uS13_arch"/>
    <property type="match status" value="1"/>
</dbReference>
<dbReference type="PANTHER" id="PTHR10871">
    <property type="entry name" value="30S RIBOSOMAL PROTEIN S13/40S RIBOSOMAL PROTEIN S18"/>
    <property type="match status" value="1"/>
</dbReference>
<dbReference type="PANTHER" id="PTHR10871:SF3">
    <property type="entry name" value="SMALL RIBOSOMAL SUBUNIT PROTEIN US13"/>
    <property type="match status" value="1"/>
</dbReference>
<dbReference type="Pfam" id="PF00416">
    <property type="entry name" value="Ribosomal_S13"/>
    <property type="match status" value="1"/>
</dbReference>
<dbReference type="PIRSF" id="PIRSF002134">
    <property type="entry name" value="Ribosomal_S13"/>
    <property type="match status" value="1"/>
</dbReference>
<dbReference type="SUPFAM" id="SSF46946">
    <property type="entry name" value="S13-like H2TH domain"/>
    <property type="match status" value="1"/>
</dbReference>
<dbReference type="PROSITE" id="PS00646">
    <property type="entry name" value="RIBOSOMAL_S13_1"/>
    <property type="match status" value="1"/>
</dbReference>
<dbReference type="PROSITE" id="PS50159">
    <property type="entry name" value="RIBOSOMAL_S13_2"/>
    <property type="match status" value="1"/>
</dbReference>
<protein>
    <recommendedName>
        <fullName evidence="1">Small ribosomal subunit protein uS13</fullName>
    </recommendedName>
    <alternativeName>
        <fullName evidence="3">30S ribosomal protein S13</fullName>
    </alternativeName>
</protein>
<comment type="function">
    <text evidence="1">Located at the top of the head of the 30S subunit, it contacts several helices of the 16S rRNA. In the 70S ribosome it contacts the 23S rRNA (bridge B1a) and protein L5 of the 50S subunit (bridge B1b), connecting the 2 subunits; these bridges are implicated in subunit movement.</text>
</comment>
<comment type="subunit">
    <text evidence="1">Part of the 30S ribosomal subunit. Forms a loose heterodimer with protein S19. Forms two bridges to the 50S subunit in the 70S ribosome.</text>
</comment>
<comment type="similarity">
    <text evidence="1">Belongs to the universal ribosomal protein uS13 family.</text>
</comment>
<evidence type="ECO:0000255" key="1">
    <source>
        <dbReference type="HAMAP-Rule" id="MF_01315"/>
    </source>
</evidence>
<evidence type="ECO:0000256" key="2">
    <source>
        <dbReference type="SAM" id="MobiDB-lite"/>
    </source>
</evidence>
<evidence type="ECO:0000305" key="3"/>
<keyword id="KW-1185">Reference proteome</keyword>
<keyword id="KW-0687">Ribonucleoprotein</keyword>
<keyword id="KW-0689">Ribosomal protein</keyword>
<keyword id="KW-0694">RNA-binding</keyword>
<keyword id="KW-0699">rRNA-binding</keyword>
<reference key="1">
    <citation type="journal article" date="2005" name="Genome Res.">
        <title>Living with two extremes: conclusions from the genome sequence of Natronomonas pharaonis.</title>
        <authorList>
            <person name="Falb M."/>
            <person name="Pfeiffer F."/>
            <person name="Palm P."/>
            <person name="Rodewald K."/>
            <person name="Hickmann V."/>
            <person name="Tittor J."/>
            <person name="Oesterhelt D."/>
        </authorList>
    </citation>
    <scope>NUCLEOTIDE SEQUENCE [LARGE SCALE GENOMIC DNA]</scope>
    <source>
        <strain>ATCC 35678 / DSM 2160 / CIP 103997 / JCM 8858 / NBRC 14720 / NCIMB 2260 / Gabara</strain>
    </source>
</reference>
<organism>
    <name type="scientific">Natronomonas pharaonis (strain ATCC 35678 / DSM 2160 / CIP 103997 / JCM 8858 / NBRC 14720 / NCIMB 2260 / Gabara)</name>
    <name type="common">Halobacterium pharaonis</name>
    <dbReference type="NCBI Taxonomy" id="348780"/>
    <lineage>
        <taxon>Archaea</taxon>
        <taxon>Methanobacteriati</taxon>
        <taxon>Methanobacteriota</taxon>
        <taxon>Stenosarchaea group</taxon>
        <taxon>Halobacteria</taxon>
        <taxon>Halobacteriales</taxon>
        <taxon>Haloarculaceae</taxon>
        <taxon>Natronomonas</taxon>
    </lineage>
</organism>
<name>RS13_NATPD</name>
<accession>Q3IQT9</accession>
<feature type="chain" id="PRO_0000306761" description="Small ribosomal subunit protein uS13">
    <location>
        <begin position="1"/>
        <end position="170"/>
    </location>
</feature>
<feature type="region of interest" description="Disordered" evidence="2">
    <location>
        <begin position="128"/>
        <end position="170"/>
    </location>
</feature>
<feature type="compositionally biased region" description="Basic residues" evidence="2">
    <location>
        <begin position="128"/>
        <end position="140"/>
    </location>
</feature>
<gene>
    <name evidence="1" type="primary">rps13</name>
    <name type="ordered locus">NP_2828A</name>
</gene>
<sequence length="170" mass="19280">MSTEEPQADEEDEDLQYFVRIGQTDLDGTKSVERALTDMNGIGRRVARIIAEKAEVDRRDVLGALDEEKIDDVVAAVEEYGDEVPEWLTNHQKDFFTGETTHEIGNDLQMSRRQDINRMKKIDAYRGVRHKRGQKVRGQRTKSTGRTEGTIGVNVEAIKEEQAEDGGDEE</sequence>